<dbReference type="EC" id="4.1.99.17" evidence="1"/>
<dbReference type="EMBL" id="CP000034">
    <property type="protein sequence ID" value="ABB63688.1"/>
    <property type="molecule type" value="Genomic_DNA"/>
</dbReference>
<dbReference type="RefSeq" id="WP_001276934.1">
    <property type="nucleotide sequence ID" value="NC_007606.1"/>
</dbReference>
<dbReference type="RefSeq" id="YP_405179.1">
    <property type="nucleotide sequence ID" value="NC_007606.1"/>
</dbReference>
<dbReference type="SMR" id="Q32AG7"/>
<dbReference type="STRING" id="300267.SDY_3732"/>
<dbReference type="EnsemblBacteria" id="ABB63688">
    <property type="protein sequence ID" value="ABB63688"/>
    <property type="gene ID" value="SDY_3732"/>
</dbReference>
<dbReference type="KEGG" id="sdy:SDY_3732"/>
<dbReference type="PATRIC" id="fig|300267.13.peg.4424"/>
<dbReference type="HOGENOM" id="CLU_013181_2_1_6"/>
<dbReference type="UniPathway" id="UPA00060"/>
<dbReference type="Proteomes" id="UP000002716">
    <property type="component" value="Chromosome"/>
</dbReference>
<dbReference type="GO" id="GO:0005829">
    <property type="term" value="C:cytosol"/>
    <property type="evidence" value="ECO:0007669"/>
    <property type="project" value="TreeGrafter"/>
</dbReference>
<dbReference type="GO" id="GO:0051539">
    <property type="term" value="F:4 iron, 4 sulfur cluster binding"/>
    <property type="evidence" value="ECO:0007669"/>
    <property type="project" value="UniProtKB-KW"/>
</dbReference>
<dbReference type="GO" id="GO:0016830">
    <property type="term" value="F:carbon-carbon lyase activity"/>
    <property type="evidence" value="ECO:0007669"/>
    <property type="project" value="InterPro"/>
</dbReference>
<dbReference type="GO" id="GO:0008270">
    <property type="term" value="F:zinc ion binding"/>
    <property type="evidence" value="ECO:0007669"/>
    <property type="project" value="UniProtKB-UniRule"/>
</dbReference>
<dbReference type="GO" id="GO:0009228">
    <property type="term" value="P:thiamine biosynthetic process"/>
    <property type="evidence" value="ECO:0007669"/>
    <property type="project" value="UniProtKB-KW"/>
</dbReference>
<dbReference type="GO" id="GO:0009229">
    <property type="term" value="P:thiamine diphosphate biosynthetic process"/>
    <property type="evidence" value="ECO:0007669"/>
    <property type="project" value="UniProtKB-UniRule"/>
</dbReference>
<dbReference type="FunFam" id="3.20.20.540:FF:000001">
    <property type="entry name" value="Phosphomethylpyrimidine synthase"/>
    <property type="match status" value="1"/>
</dbReference>
<dbReference type="Gene3D" id="6.10.250.620">
    <property type="match status" value="1"/>
</dbReference>
<dbReference type="Gene3D" id="3.20.20.540">
    <property type="entry name" value="Radical SAM ThiC family, central domain"/>
    <property type="match status" value="1"/>
</dbReference>
<dbReference type="HAMAP" id="MF_00089">
    <property type="entry name" value="ThiC"/>
    <property type="match status" value="1"/>
</dbReference>
<dbReference type="InterPro" id="IPR037509">
    <property type="entry name" value="ThiC"/>
</dbReference>
<dbReference type="InterPro" id="IPR025747">
    <property type="entry name" value="ThiC-associated_dom"/>
</dbReference>
<dbReference type="InterPro" id="IPR038521">
    <property type="entry name" value="ThiC/Bza_core_dom"/>
</dbReference>
<dbReference type="InterPro" id="IPR002817">
    <property type="entry name" value="ThiC/BzaA/B"/>
</dbReference>
<dbReference type="NCBIfam" id="NF006763">
    <property type="entry name" value="PRK09284.1"/>
    <property type="match status" value="1"/>
</dbReference>
<dbReference type="NCBIfam" id="NF009895">
    <property type="entry name" value="PRK13352.1"/>
    <property type="match status" value="1"/>
</dbReference>
<dbReference type="NCBIfam" id="TIGR00190">
    <property type="entry name" value="thiC"/>
    <property type="match status" value="1"/>
</dbReference>
<dbReference type="PANTHER" id="PTHR30557:SF1">
    <property type="entry name" value="PHOSPHOMETHYLPYRIMIDINE SYNTHASE, CHLOROPLASTIC"/>
    <property type="match status" value="1"/>
</dbReference>
<dbReference type="PANTHER" id="PTHR30557">
    <property type="entry name" value="THIAMINE BIOSYNTHESIS PROTEIN THIC"/>
    <property type="match status" value="1"/>
</dbReference>
<dbReference type="Pfam" id="PF13667">
    <property type="entry name" value="ThiC-associated"/>
    <property type="match status" value="1"/>
</dbReference>
<dbReference type="Pfam" id="PF01964">
    <property type="entry name" value="ThiC_Rad_SAM"/>
    <property type="match status" value="1"/>
</dbReference>
<dbReference type="SFLD" id="SFLDF00407">
    <property type="entry name" value="phosphomethylpyrimidine_syntha"/>
    <property type="match status" value="1"/>
</dbReference>
<dbReference type="SFLD" id="SFLDG01114">
    <property type="entry name" value="phosphomethylpyrimidine_syntha"/>
    <property type="match status" value="1"/>
</dbReference>
<dbReference type="SFLD" id="SFLDS00113">
    <property type="entry name" value="Radical_SAM_Phosphomethylpyrim"/>
    <property type="match status" value="1"/>
</dbReference>
<reference key="1">
    <citation type="journal article" date="2005" name="Nucleic Acids Res.">
        <title>Genome dynamics and diversity of Shigella species, the etiologic agents of bacillary dysentery.</title>
        <authorList>
            <person name="Yang F."/>
            <person name="Yang J."/>
            <person name="Zhang X."/>
            <person name="Chen L."/>
            <person name="Jiang Y."/>
            <person name="Yan Y."/>
            <person name="Tang X."/>
            <person name="Wang J."/>
            <person name="Xiong Z."/>
            <person name="Dong J."/>
            <person name="Xue Y."/>
            <person name="Zhu Y."/>
            <person name="Xu X."/>
            <person name="Sun L."/>
            <person name="Chen S."/>
            <person name="Nie H."/>
            <person name="Peng J."/>
            <person name="Xu J."/>
            <person name="Wang Y."/>
            <person name="Yuan Z."/>
            <person name="Wen Y."/>
            <person name="Yao Z."/>
            <person name="Shen Y."/>
            <person name="Qiang B."/>
            <person name="Hou Y."/>
            <person name="Yu J."/>
            <person name="Jin Q."/>
        </authorList>
    </citation>
    <scope>NUCLEOTIDE SEQUENCE [LARGE SCALE GENOMIC DNA]</scope>
    <source>
        <strain>Sd197</strain>
    </source>
</reference>
<proteinExistence type="inferred from homology"/>
<sequence length="631" mass="70806">MSATKLTRREQRARAQHFIDTLEGTAFPNSKRIYITGTQPGVRVPMREIQLSPTLIGGSKEQPQYEENEAIPVYDTSGPYGDPQIAINVQQGLAKLRQPWIDARGDTEELTVRSSDYTKARLAYDGLDELRFSGVLTPKRAKAGRRVTQLHYARQGIITPEMEFIAIRENMGRERIRSEVLRHQHSGMSFGARLPENITAESVRDEVAAGRAIIPANINHPESEPMIIGRNFLVKVNANIGNSAVTSSIEEEVEKLVWSTRWGADTVMDLSTGRYIHETREWILRNSPVPIGTVPIYQALEKVNGIAEDLTWEAFRDTLLEQAEQGVDYFTIHAGVLLRYVPMTAKRLTGIVSRGGSIMAKWCLSHHQENFLYQHFREICEICAAYDVSLSLGDGLRPGSIQDANDEAQFAELHTLGELTKIAWEYDVQVMIEGPGHVPMQMIRRNMTEELEHCHEAPFYTLGPLTTDIAPGYDHFTSGIGAAMIGWFGCAMLCYVTPKEHLGLPNKEDVKQGLITYKIAAHAADLAKGHPGAQIRDNAMSKARFEFRWEDQFNLALDPFTARTYHDETLPQESGKVAHFCSMCGPKFCSMKISQEVRDYAAAQTIEVGMADMSENFRARGGEIYLRKEEA</sequence>
<accession>Q32AG7</accession>
<organism>
    <name type="scientific">Shigella dysenteriae serotype 1 (strain Sd197)</name>
    <dbReference type="NCBI Taxonomy" id="300267"/>
    <lineage>
        <taxon>Bacteria</taxon>
        <taxon>Pseudomonadati</taxon>
        <taxon>Pseudomonadota</taxon>
        <taxon>Gammaproteobacteria</taxon>
        <taxon>Enterobacterales</taxon>
        <taxon>Enterobacteriaceae</taxon>
        <taxon>Shigella</taxon>
    </lineage>
</organism>
<evidence type="ECO:0000255" key="1">
    <source>
        <dbReference type="HAMAP-Rule" id="MF_00089"/>
    </source>
</evidence>
<name>THIC_SHIDS</name>
<protein>
    <recommendedName>
        <fullName evidence="1">Phosphomethylpyrimidine synthase</fullName>
        <ecNumber evidence="1">4.1.99.17</ecNumber>
    </recommendedName>
    <alternativeName>
        <fullName evidence="1">Hydroxymethylpyrimidine phosphate synthase</fullName>
        <shortName evidence="1">HMP-P synthase</shortName>
        <shortName evidence="1">HMP-phosphate synthase</shortName>
        <shortName evidence="1">HMPP synthase</shortName>
    </alternativeName>
    <alternativeName>
        <fullName evidence="1">Thiamine biosynthesis protein ThiC</fullName>
    </alternativeName>
</protein>
<feature type="chain" id="PRO_0000242303" description="Phosphomethylpyrimidine synthase">
    <location>
        <begin position="1"/>
        <end position="631"/>
    </location>
</feature>
<feature type="binding site" evidence="1">
    <location>
        <position position="239"/>
    </location>
    <ligand>
        <name>substrate</name>
    </ligand>
</feature>
<feature type="binding site" evidence="1">
    <location>
        <position position="268"/>
    </location>
    <ligand>
        <name>substrate</name>
    </ligand>
</feature>
<feature type="binding site" evidence="1">
    <location>
        <position position="297"/>
    </location>
    <ligand>
        <name>substrate</name>
    </ligand>
</feature>
<feature type="binding site" evidence="1">
    <location>
        <position position="333"/>
    </location>
    <ligand>
        <name>substrate</name>
    </ligand>
</feature>
<feature type="binding site" evidence="1">
    <location>
        <begin position="353"/>
        <end position="355"/>
    </location>
    <ligand>
        <name>substrate</name>
    </ligand>
</feature>
<feature type="binding site" evidence="1">
    <location>
        <begin position="394"/>
        <end position="397"/>
    </location>
    <ligand>
        <name>substrate</name>
    </ligand>
</feature>
<feature type="binding site" evidence="1">
    <location>
        <position position="433"/>
    </location>
    <ligand>
        <name>substrate</name>
    </ligand>
</feature>
<feature type="binding site" evidence="1">
    <location>
        <position position="437"/>
    </location>
    <ligand>
        <name>Zn(2+)</name>
        <dbReference type="ChEBI" id="CHEBI:29105"/>
    </ligand>
</feature>
<feature type="binding site" evidence="1">
    <location>
        <position position="460"/>
    </location>
    <ligand>
        <name>substrate</name>
    </ligand>
</feature>
<feature type="binding site" evidence="1">
    <location>
        <position position="501"/>
    </location>
    <ligand>
        <name>Zn(2+)</name>
        <dbReference type="ChEBI" id="CHEBI:29105"/>
    </ligand>
</feature>
<feature type="binding site" evidence="1">
    <location>
        <position position="581"/>
    </location>
    <ligand>
        <name>[4Fe-4S] cluster</name>
        <dbReference type="ChEBI" id="CHEBI:49883"/>
        <note>4Fe-4S-S-AdoMet</note>
    </ligand>
</feature>
<feature type="binding site" evidence="1">
    <location>
        <position position="584"/>
    </location>
    <ligand>
        <name>[4Fe-4S] cluster</name>
        <dbReference type="ChEBI" id="CHEBI:49883"/>
        <note>4Fe-4S-S-AdoMet</note>
    </ligand>
</feature>
<feature type="binding site" evidence="1">
    <location>
        <position position="589"/>
    </location>
    <ligand>
        <name>[4Fe-4S] cluster</name>
        <dbReference type="ChEBI" id="CHEBI:49883"/>
        <note>4Fe-4S-S-AdoMet</note>
    </ligand>
</feature>
<keyword id="KW-0004">4Fe-4S</keyword>
<keyword id="KW-0408">Iron</keyword>
<keyword id="KW-0411">Iron-sulfur</keyword>
<keyword id="KW-0456">Lyase</keyword>
<keyword id="KW-0479">Metal-binding</keyword>
<keyword id="KW-1185">Reference proteome</keyword>
<keyword id="KW-0949">S-adenosyl-L-methionine</keyword>
<keyword id="KW-0784">Thiamine biosynthesis</keyword>
<keyword id="KW-0862">Zinc</keyword>
<gene>
    <name evidence="1" type="primary">thiC</name>
    <name type="ordered locus">SDY_3732</name>
</gene>
<comment type="function">
    <text evidence="1">Catalyzes the synthesis of the hydroxymethylpyrimidine phosphate (HMP-P) moiety of thiamine from aminoimidazole ribotide (AIR) in a radical S-adenosyl-L-methionine (SAM)-dependent reaction.</text>
</comment>
<comment type="catalytic activity">
    <reaction evidence="1">
        <text>5-amino-1-(5-phospho-beta-D-ribosyl)imidazole + S-adenosyl-L-methionine = 4-amino-2-methyl-5-(phosphooxymethyl)pyrimidine + CO + 5'-deoxyadenosine + formate + L-methionine + 3 H(+)</text>
        <dbReference type="Rhea" id="RHEA:24840"/>
        <dbReference type="ChEBI" id="CHEBI:15378"/>
        <dbReference type="ChEBI" id="CHEBI:15740"/>
        <dbReference type="ChEBI" id="CHEBI:17245"/>
        <dbReference type="ChEBI" id="CHEBI:17319"/>
        <dbReference type="ChEBI" id="CHEBI:57844"/>
        <dbReference type="ChEBI" id="CHEBI:58354"/>
        <dbReference type="ChEBI" id="CHEBI:59789"/>
        <dbReference type="ChEBI" id="CHEBI:137981"/>
        <dbReference type="EC" id="4.1.99.17"/>
    </reaction>
</comment>
<comment type="cofactor">
    <cofactor evidence="1">
        <name>[4Fe-4S] cluster</name>
        <dbReference type="ChEBI" id="CHEBI:49883"/>
    </cofactor>
    <text evidence="1">Binds 1 [4Fe-4S] cluster per subunit. The cluster is coordinated with 3 cysteines and an exchangeable S-adenosyl-L-methionine.</text>
</comment>
<comment type="pathway">
    <text evidence="1">Cofactor biosynthesis; thiamine diphosphate biosynthesis.</text>
</comment>
<comment type="subunit">
    <text evidence="1">Homodimer.</text>
</comment>
<comment type="similarity">
    <text evidence="1">Belongs to the ThiC family.</text>
</comment>